<dbReference type="EMBL" id="AJ278124">
    <property type="protein sequence ID" value="CAB92967.1"/>
    <property type="molecule type" value="mRNA"/>
</dbReference>
<dbReference type="EMBL" id="AY013297">
    <property type="protein sequence ID" value="AAG38940.1"/>
    <property type="molecule type" value="mRNA"/>
</dbReference>
<dbReference type="EMBL" id="AF240633">
    <property type="protein sequence ID" value="AAG24509.1"/>
    <property type="molecule type" value="mRNA"/>
</dbReference>
<dbReference type="EMBL" id="AF243390">
    <property type="protein sequence ID" value="AAG27296.1"/>
    <property type="molecule type" value="Genomic_DNA"/>
</dbReference>
<dbReference type="EMBL" id="AF243387">
    <property type="protein sequence ID" value="AAG27296.1"/>
    <property type="status" value="JOINED"/>
    <property type="molecule type" value="Genomic_DNA"/>
</dbReference>
<dbReference type="EMBL" id="AF243388">
    <property type="protein sequence ID" value="AAG27296.1"/>
    <property type="status" value="JOINED"/>
    <property type="molecule type" value="Genomic_DNA"/>
</dbReference>
<dbReference type="EMBL" id="AF243389">
    <property type="protein sequence ID" value="AAG27296.1"/>
    <property type="status" value="JOINED"/>
    <property type="molecule type" value="Genomic_DNA"/>
</dbReference>
<dbReference type="EMBL" id="AL359210">
    <property type="protein sequence ID" value="CAB94568.1"/>
    <property type="molecule type" value="mRNA"/>
</dbReference>
<dbReference type="EMBL" id="BC025753">
    <property type="protein sequence ID" value="AAH25753.1"/>
    <property type="molecule type" value="mRNA"/>
</dbReference>
<dbReference type="CCDS" id="CCDS7330.1"/>
<dbReference type="RefSeq" id="NP_067068.1">
    <property type="nucleotide sequence ID" value="NM_021245.4"/>
</dbReference>
<dbReference type="PDB" id="7A8T">
    <property type="method" value="X-ray"/>
    <property type="resolution" value="2.69 A"/>
    <property type="chains" value="B=176-263"/>
</dbReference>
<dbReference type="PDB" id="7A8U">
    <property type="method" value="X-ray"/>
    <property type="resolution" value="3.80 A"/>
    <property type="chains" value="B=92-299"/>
</dbReference>
<dbReference type="PDB" id="7ANK">
    <property type="method" value="X-ray"/>
    <property type="resolution" value="3.20 A"/>
    <property type="chains" value="C=92-299"/>
</dbReference>
<dbReference type="PDBsum" id="7A8T"/>
<dbReference type="PDBsum" id="7A8U"/>
<dbReference type="PDBsum" id="7ANK"/>
<dbReference type="SASBDB" id="Q9NP98"/>
<dbReference type="SMR" id="Q9NP98"/>
<dbReference type="BioGRID" id="121849">
    <property type="interactions" value="46"/>
</dbReference>
<dbReference type="FunCoup" id="Q9NP98">
    <property type="interactions" value="18"/>
</dbReference>
<dbReference type="IntAct" id="Q9NP98">
    <property type="interactions" value="36"/>
</dbReference>
<dbReference type="MINT" id="Q9NP98"/>
<dbReference type="STRING" id="9606.ENSP00000352272"/>
<dbReference type="GlyGen" id="Q9NP98">
    <property type="glycosylation" value="1 site"/>
</dbReference>
<dbReference type="iPTMnet" id="Q9NP98"/>
<dbReference type="PhosphoSitePlus" id="Q9NP98"/>
<dbReference type="BioMuta" id="MYOZ1"/>
<dbReference type="DMDM" id="74734300"/>
<dbReference type="MassIVE" id="Q9NP98"/>
<dbReference type="PaxDb" id="9606-ENSP00000352272"/>
<dbReference type="PeptideAtlas" id="Q9NP98"/>
<dbReference type="ProteomicsDB" id="81941"/>
<dbReference type="Antibodypedia" id="29468">
    <property type="antibodies" value="294 antibodies from 27 providers"/>
</dbReference>
<dbReference type="DNASU" id="58529"/>
<dbReference type="Ensembl" id="ENST00000359322.5">
    <property type="protein sequence ID" value="ENSP00000352272.4"/>
    <property type="gene ID" value="ENSG00000177791.12"/>
</dbReference>
<dbReference type="GeneID" id="58529"/>
<dbReference type="KEGG" id="hsa:58529"/>
<dbReference type="MANE-Select" id="ENST00000359322.5">
    <property type="protein sequence ID" value="ENSP00000352272.4"/>
    <property type="RefSeq nucleotide sequence ID" value="NM_021245.4"/>
    <property type="RefSeq protein sequence ID" value="NP_067068.1"/>
</dbReference>
<dbReference type="UCSC" id="uc001jur.5">
    <property type="organism name" value="human"/>
</dbReference>
<dbReference type="AGR" id="HGNC:13752"/>
<dbReference type="CTD" id="58529"/>
<dbReference type="DisGeNET" id="58529"/>
<dbReference type="GeneCards" id="MYOZ1"/>
<dbReference type="HGNC" id="HGNC:13752">
    <property type="gene designation" value="MYOZ1"/>
</dbReference>
<dbReference type="HPA" id="ENSG00000177791">
    <property type="expression patterns" value="Group enriched (skeletal muscle, tongue)"/>
</dbReference>
<dbReference type="MalaCards" id="MYOZ1"/>
<dbReference type="MIM" id="605603">
    <property type="type" value="gene"/>
</dbReference>
<dbReference type="neXtProt" id="NX_Q9NP98"/>
<dbReference type="OpenTargets" id="ENSG00000177791"/>
<dbReference type="PharmGKB" id="PA31420"/>
<dbReference type="VEuPathDB" id="HostDB:ENSG00000177791"/>
<dbReference type="eggNOG" id="ENOG502R4N9">
    <property type="taxonomic scope" value="Eukaryota"/>
</dbReference>
<dbReference type="GeneTree" id="ENSGT00950000183027"/>
<dbReference type="HOGENOM" id="CLU_071316_0_0_1"/>
<dbReference type="InParanoid" id="Q9NP98"/>
<dbReference type="OMA" id="TFQMPKI"/>
<dbReference type="OrthoDB" id="9901707at2759"/>
<dbReference type="PAN-GO" id="Q9NP98">
    <property type="GO annotations" value="5 GO annotations based on evolutionary models"/>
</dbReference>
<dbReference type="PhylomeDB" id="Q9NP98"/>
<dbReference type="TreeFam" id="TF331748"/>
<dbReference type="PathwayCommons" id="Q9NP98"/>
<dbReference type="SignaLink" id="Q9NP98"/>
<dbReference type="BioGRID-ORCS" id="58529">
    <property type="hits" value="6 hits in 1145 CRISPR screens"/>
</dbReference>
<dbReference type="CD-CODE" id="ED61D366">
    <property type="entry name" value="FATZ-1 condensate"/>
</dbReference>
<dbReference type="ChiTaRS" id="MYOZ1">
    <property type="organism name" value="human"/>
</dbReference>
<dbReference type="GeneWiki" id="MYOZ1"/>
<dbReference type="GenomeRNAi" id="58529"/>
<dbReference type="Pharos" id="Q9NP98">
    <property type="development level" value="Tbio"/>
</dbReference>
<dbReference type="PRO" id="PR:Q9NP98"/>
<dbReference type="Proteomes" id="UP000005640">
    <property type="component" value="Chromosome 10"/>
</dbReference>
<dbReference type="RNAct" id="Q9NP98">
    <property type="molecule type" value="protein"/>
</dbReference>
<dbReference type="Bgee" id="ENSG00000177791">
    <property type="expression patterns" value="Expressed in hindlimb stylopod muscle and 124 other cell types or tissues"/>
</dbReference>
<dbReference type="GO" id="GO:0015629">
    <property type="term" value="C:actin cytoskeleton"/>
    <property type="evidence" value="ECO:0000318"/>
    <property type="project" value="GO_Central"/>
</dbReference>
<dbReference type="GO" id="GO:0005634">
    <property type="term" value="C:nucleus"/>
    <property type="evidence" value="ECO:0007669"/>
    <property type="project" value="UniProtKB-SubCell"/>
</dbReference>
<dbReference type="GO" id="GO:0031143">
    <property type="term" value="C:pseudopodium"/>
    <property type="evidence" value="ECO:0007669"/>
    <property type="project" value="UniProtKB-SubCell"/>
</dbReference>
<dbReference type="GO" id="GO:0030018">
    <property type="term" value="C:Z disc"/>
    <property type="evidence" value="ECO:0000318"/>
    <property type="project" value="GO_Central"/>
</dbReference>
<dbReference type="GO" id="GO:0003779">
    <property type="term" value="F:actin binding"/>
    <property type="evidence" value="ECO:0000318"/>
    <property type="project" value="GO_Central"/>
</dbReference>
<dbReference type="GO" id="GO:0042805">
    <property type="term" value="F:actinin binding"/>
    <property type="evidence" value="ECO:0000315"/>
    <property type="project" value="DisProt"/>
</dbReference>
<dbReference type="GO" id="GO:0051373">
    <property type="term" value="F:FATZ binding"/>
    <property type="evidence" value="ECO:0000314"/>
    <property type="project" value="UniProtKB"/>
</dbReference>
<dbReference type="GO" id="GO:0140693">
    <property type="term" value="F:molecular condensate scaffold activity"/>
    <property type="evidence" value="ECO:0000314"/>
    <property type="project" value="DisProt"/>
</dbReference>
<dbReference type="GO" id="GO:0004865">
    <property type="term" value="F:protein serine/threonine phosphatase inhibitor activity"/>
    <property type="evidence" value="ECO:0000250"/>
    <property type="project" value="BHF-UCL"/>
</dbReference>
<dbReference type="GO" id="GO:0031433">
    <property type="term" value="F:telethonin binding"/>
    <property type="evidence" value="ECO:0000318"/>
    <property type="project" value="GO_Central"/>
</dbReference>
<dbReference type="GO" id="GO:0030239">
    <property type="term" value="P:myofibril assembly"/>
    <property type="evidence" value="ECO:0000304"/>
    <property type="project" value="UniProtKB"/>
</dbReference>
<dbReference type="GO" id="GO:0070885">
    <property type="term" value="P:negative regulation of calcineurin-NFAT signaling cascade"/>
    <property type="evidence" value="ECO:0000250"/>
    <property type="project" value="BHF-UCL"/>
</dbReference>
<dbReference type="GO" id="GO:0043417">
    <property type="term" value="P:negative regulation of skeletal muscle tissue regeneration"/>
    <property type="evidence" value="ECO:0000250"/>
    <property type="project" value="BHF-UCL"/>
</dbReference>
<dbReference type="GO" id="GO:0000122">
    <property type="term" value="P:negative regulation of transcription by RNA polymerase II"/>
    <property type="evidence" value="ECO:0000250"/>
    <property type="project" value="BHF-UCL"/>
</dbReference>
<dbReference type="GO" id="GO:0045214">
    <property type="term" value="P:sarcomere organization"/>
    <property type="evidence" value="ECO:0000250"/>
    <property type="project" value="BHF-UCL"/>
</dbReference>
<dbReference type="GO" id="GO:0043503">
    <property type="term" value="P:skeletal muscle fiber adaptation"/>
    <property type="evidence" value="ECO:0000250"/>
    <property type="project" value="BHF-UCL"/>
</dbReference>
<dbReference type="GO" id="GO:0007519">
    <property type="term" value="P:skeletal muscle tissue development"/>
    <property type="evidence" value="ECO:0000250"/>
    <property type="project" value="BHF-UCL"/>
</dbReference>
<dbReference type="GO" id="GO:0042060">
    <property type="term" value="P:wound healing"/>
    <property type="evidence" value="ECO:0000250"/>
    <property type="project" value="BHF-UCL"/>
</dbReference>
<dbReference type="InterPro" id="IPR008438">
    <property type="entry name" value="MYOZ"/>
</dbReference>
<dbReference type="PANTHER" id="PTHR15941">
    <property type="entry name" value="MYOZENIN"/>
    <property type="match status" value="1"/>
</dbReference>
<dbReference type="PANTHER" id="PTHR15941:SF11">
    <property type="entry name" value="MYOZENIN-1"/>
    <property type="match status" value="1"/>
</dbReference>
<dbReference type="Pfam" id="PF05556">
    <property type="entry name" value="Calsarcin"/>
    <property type="match status" value="1"/>
</dbReference>
<protein>
    <recommendedName>
        <fullName>Myozenin-1</fullName>
    </recommendedName>
    <alternativeName>
        <fullName>Calsarcin-2</fullName>
    </alternativeName>
    <alternativeName>
        <fullName>Filamin-, actinin- and telethonin-binding protein</fullName>
    </alternativeName>
    <alternativeName>
        <fullName>Protein FATZ</fullName>
    </alternativeName>
</protein>
<evidence type="ECO:0000250" key="1">
    <source>
        <dbReference type="UniProtKB" id="Q9JK37"/>
    </source>
</evidence>
<evidence type="ECO:0000256" key="2">
    <source>
        <dbReference type="SAM" id="MobiDB-lite"/>
    </source>
</evidence>
<evidence type="ECO:0000269" key="3">
    <source>
    </source>
</evidence>
<evidence type="ECO:0000269" key="4">
    <source>
    </source>
</evidence>
<evidence type="ECO:0000269" key="5">
    <source>
    </source>
</evidence>
<evidence type="ECO:0000269" key="6">
    <source>
    </source>
</evidence>
<evidence type="ECO:0000269" key="7">
    <source>
    </source>
</evidence>
<evidence type="ECO:0000305" key="8"/>
<evidence type="ECO:0000312" key="9">
    <source>
        <dbReference type="EMBL" id="AAG24509.1"/>
    </source>
</evidence>
<evidence type="ECO:0000312" key="10">
    <source>
        <dbReference type="EMBL" id="AAG38940.1"/>
    </source>
</evidence>
<evidence type="ECO:0000312" key="11">
    <source>
        <dbReference type="EMBL" id="AAH25753.1"/>
    </source>
</evidence>
<evidence type="ECO:0000312" key="12">
    <source>
        <dbReference type="EMBL" id="CAB92967.1"/>
    </source>
</evidence>
<evidence type="ECO:0000312" key="13">
    <source>
        <dbReference type="EMBL" id="CAB94568.1"/>
    </source>
</evidence>
<evidence type="ECO:0000312" key="14">
    <source>
        <dbReference type="HGNC" id="HGNC:13752"/>
    </source>
</evidence>
<evidence type="ECO:0007829" key="15">
    <source>
        <dbReference type="PDB" id="7A8T"/>
    </source>
</evidence>
<comment type="function">
    <text>Myozenins may serve as intracellular binding proteins involved in linking Z-disk proteins such as alpha-actinin, gamma-filamin, TCAP/telethonin, LDB3/ZASP and localizing calcineurin signaling to the sarcomere. Plays an important role in the modulation of calcineurin signaling. May play a role in myofibrillogenesis.</text>
</comment>
<comment type="subunit">
    <text evidence="3 4 5 6 7">Interacts with ACTN2, ACTN3, FLNA, FLNB, FLNC, LDB3, PPP3CA and TCAP. Interacts via its C-terminal region with MYOT.</text>
</comment>
<comment type="interaction">
    <interactant intactId="EBI-744402">
        <id>Q9NP98</id>
    </interactant>
    <interactant intactId="EBI-351710">
        <id>P12814</id>
        <label>ACTN1</label>
    </interactant>
    <organismsDiffer>false</organismsDiffer>
    <experiments>4</experiments>
</comment>
<comment type="interaction">
    <interactant intactId="EBI-744402">
        <id>Q9NP98</id>
    </interactant>
    <interactant intactId="EBI-2880652">
        <id>Q08043</id>
        <label>ACTN3</label>
    </interactant>
    <organismsDiffer>false</organismsDiffer>
    <experiments>3</experiments>
</comment>
<comment type="interaction">
    <interactant intactId="EBI-744402">
        <id>Q9NP98</id>
    </interactant>
    <interactant intactId="EBI-357530">
        <id>Q9ULX6</id>
        <label>AKAP8L</label>
    </interactant>
    <organismsDiffer>false</organismsDiffer>
    <experiments>3</experiments>
</comment>
<comment type="interaction">
    <interactant intactId="EBI-744402">
        <id>Q9NP98</id>
    </interactant>
    <interactant intactId="EBI-2949658">
        <id>O95429</id>
        <label>BAG4</label>
    </interactant>
    <organismsDiffer>false</organismsDiffer>
    <experiments>3</experiments>
</comment>
<comment type="interaction">
    <interactant intactId="EBI-744402">
        <id>Q9NP98</id>
    </interactant>
    <interactant intactId="EBI-4314501">
        <id>P40199</id>
        <label>CEACAM6</label>
    </interactant>
    <organismsDiffer>false</organismsDiffer>
    <experiments>3</experiments>
</comment>
<comment type="interaction">
    <interactant intactId="EBI-744402">
        <id>Q9NP98</id>
    </interactant>
    <interactant intactId="EBI-742887">
        <id>Q8TAP6</id>
        <label>CEP76</label>
    </interactant>
    <organismsDiffer>false</organismsDiffer>
    <experiments>3</experiments>
</comment>
<comment type="interaction">
    <interactant intactId="EBI-744402">
        <id>Q9NP98</id>
    </interactant>
    <interactant intactId="EBI-748171">
        <id>O43186</id>
        <label>CRX</label>
    </interactant>
    <organismsDiffer>false</organismsDiffer>
    <experiments>3</experiments>
</comment>
<comment type="interaction">
    <interactant intactId="EBI-744402">
        <id>Q9NP98</id>
    </interactant>
    <interactant intactId="EBI-711990">
        <id>O00303</id>
        <label>EIF3F</label>
    </interactant>
    <organismsDiffer>false</organismsDiffer>
    <experiments>3</experiments>
</comment>
<comment type="interaction">
    <interactant intactId="EBI-744402">
        <id>Q9NP98</id>
    </interactant>
    <interactant intactId="EBI-371922">
        <id>Q96B26</id>
        <label>EXOSC8</label>
    </interactant>
    <organismsDiffer>false</organismsDiffer>
    <experiments>3</experiments>
</comment>
<comment type="interaction">
    <interactant intactId="EBI-744402">
        <id>Q9NP98</id>
    </interactant>
    <interactant intactId="EBI-9641086">
        <id>P21333-2</id>
        <label>FLNA</label>
    </interactant>
    <organismsDiffer>false</organismsDiffer>
    <experiments>6</experiments>
</comment>
<comment type="interaction">
    <interactant intactId="EBI-744402">
        <id>Q9NP98</id>
    </interactant>
    <interactant intactId="EBI-11163335">
        <id>Q9NYA3</id>
        <label>GOLGA6A</label>
    </interactant>
    <organismsDiffer>false</organismsDiffer>
    <experiments>3</experiments>
</comment>
<comment type="interaction">
    <interactant intactId="EBI-744402">
        <id>Q9NP98</id>
    </interactant>
    <interactant intactId="EBI-1047093">
        <id>O76011</id>
        <label>KRT34</label>
    </interactant>
    <organismsDiffer>false</organismsDiffer>
    <experiments>3</experiments>
</comment>
<comment type="interaction">
    <interactant intactId="EBI-744402">
        <id>Q9NP98</id>
    </interactant>
    <interactant intactId="EBI-11958506">
        <id>O76013-2</id>
        <label>KRT36</label>
    </interactant>
    <organismsDiffer>false</organismsDiffer>
    <experiments>3</experiments>
</comment>
<comment type="interaction">
    <interactant intactId="EBI-744402">
        <id>Q9NP98</id>
    </interactant>
    <interactant intactId="EBI-10176379">
        <id>P59991</id>
        <label>KRTAP12-2</label>
    </interactant>
    <organismsDiffer>false</organismsDiffer>
    <experiments>3</experiments>
</comment>
<comment type="interaction">
    <interactant intactId="EBI-744402">
        <id>Q9NP98</id>
    </interactant>
    <interactant intactId="EBI-2865388">
        <id>Q969G2</id>
        <label>LHX4</label>
    </interactant>
    <organismsDiffer>false</organismsDiffer>
    <experiments>3</experiments>
</comment>
<comment type="interaction">
    <interactant intactId="EBI-744402">
        <id>Q9NP98</id>
    </interactant>
    <interactant intactId="EBI-741037">
        <id>Q9BRK4</id>
        <label>LZTS2</label>
    </interactant>
    <organismsDiffer>false</organismsDiffer>
    <experiments>3</experiments>
</comment>
<comment type="interaction">
    <interactant intactId="EBI-744402">
        <id>Q9NP98</id>
    </interactant>
    <interactant intactId="EBI-357275">
        <id>Q99471</id>
        <label>PFDN5</label>
    </interactant>
    <organismsDiffer>false</organismsDiffer>
    <experiments>3</experiments>
</comment>
<comment type="interaction">
    <interactant intactId="EBI-744402">
        <id>Q9NP98</id>
    </interactant>
    <interactant intactId="EBI-473160">
        <id>Q8N2W9</id>
        <label>PIAS4</label>
    </interactant>
    <organismsDiffer>false</organismsDiffer>
    <experiments>3</experiments>
</comment>
<comment type="interaction">
    <interactant intactId="EBI-744402">
        <id>Q9NP98</id>
    </interactant>
    <interactant intactId="EBI-949255">
        <id>Q58EX7</id>
        <label>PLEKHG4</label>
    </interactant>
    <organismsDiffer>false</organismsDiffer>
    <experiments>3</experiments>
</comment>
<comment type="interaction">
    <interactant intactId="EBI-744402">
        <id>Q9NP98</id>
    </interactant>
    <interactant intactId="EBI-302345">
        <id>Q8ND90</id>
        <label>PNMA1</label>
    </interactant>
    <organismsDiffer>false</organismsDiffer>
    <experiments>3</experiments>
</comment>
<comment type="interaction">
    <interactant intactId="EBI-744402">
        <id>Q9NP98</id>
    </interactant>
    <interactant intactId="EBI-359224">
        <id>Q13077</id>
        <label>TRAF1</label>
    </interactant>
    <organismsDiffer>false</organismsDiffer>
    <experiments>3</experiments>
</comment>
<comment type="interaction">
    <interactant intactId="EBI-744402">
        <id>Q9NP98</id>
    </interactant>
    <interactant intactId="EBI-740098">
        <id>P36406</id>
        <label>TRIM23</label>
    </interactant>
    <organismsDiffer>false</organismsDiffer>
    <experiments>3</experiments>
</comment>
<comment type="interaction">
    <interactant intactId="EBI-744402">
        <id>Q9NP98</id>
    </interactant>
    <interactant intactId="EBI-5661333">
        <id>Q969Q1</id>
        <label>TRIM63</label>
    </interactant>
    <organismsDiffer>false</organismsDiffer>
    <experiments>2</experiments>
</comment>
<comment type="interaction">
    <interactant intactId="EBI-744402">
        <id>Q9NP98</id>
    </interactant>
    <interactant intactId="EBI-739895">
        <id>Q8N6Y0</id>
        <label>USHBP1</label>
    </interactant>
    <organismsDiffer>false</organismsDiffer>
    <experiments>3</experiments>
</comment>
<comment type="interaction">
    <interactant intactId="EBI-744402">
        <id>Q9NP98</id>
    </interactant>
    <interactant intactId="EBI-2107455">
        <id>Q08AM6</id>
        <label>VAC14</label>
    </interactant>
    <organismsDiffer>false</organismsDiffer>
    <experiments>3</experiments>
</comment>
<comment type="interaction">
    <interactant intactId="EBI-744402">
        <id>Q9NP98</id>
    </interactant>
    <interactant intactId="EBI-357430">
        <id>P61758</id>
        <label>VBP1</label>
    </interactant>
    <organismsDiffer>false</organismsDiffer>
    <experiments>3</experiments>
</comment>
<comment type="interaction">
    <interactant intactId="EBI-744402">
        <id>Q9NP98</id>
    </interactant>
    <interactant intactId="EBI-712969">
        <id>Q9Y3C0</id>
        <label>WASHC3</label>
    </interactant>
    <organismsDiffer>false</organismsDiffer>
    <experiments>3</experiments>
</comment>
<comment type="interaction">
    <interactant intactId="EBI-744402">
        <id>Q9NP98</id>
    </interactant>
    <interactant intactId="EBI-12040603">
        <id>Q9NZC7-5</id>
        <label>WWOX</label>
    </interactant>
    <organismsDiffer>false</organismsDiffer>
    <experiments>3</experiments>
</comment>
<comment type="subcellular location">
    <subcellularLocation>
        <location>Nucleus</location>
    </subcellularLocation>
    <subcellularLocation>
        <location>Cell projection</location>
        <location>Pseudopodium</location>
    </subcellularLocation>
    <text>Localized to the nucleus and pseudopodia of undifferentiated cells and detected throughout the myotubes of differentiated cells. Colocalizes with ACTN2, FLNC and MYOT at the Z-lines of skeletal muscle.</text>
</comment>
<comment type="tissue specificity">
    <text evidence="3 4 5">Expressed primarily in skeletal muscle. Detected at lower levels in heart, prostate and pancreas.</text>
</comment>
<comment type="similarity">
    <text evidence="8">Belongs to the myozenin family.</text>
</comment>
<organism>
    <name type="scientific">Homo sapiens</name>
    <name type="common">Human</name>
    <dbReference type="NCBI Taxonomy" id="9606"/>
    <lineage>
        <taxon>Eukaryota</taxon>
        <taxon>Metazoa</taxon>
        <taxon>Chordata</taxon>
        <taxon>Craniata</taxon>
        <taxon>Vertebrata</taxon>
        <taxon>Euteleostomi</taxon>
        <taxon>Mammalia</taxon>
        <taxon>Eutheria</taxon>
        <taxon>Euarchontoglires</taxon>
        <taxon>Primates</taxon>
        <taxon>Haplorrhini</taxon>
        <taxon>Catarrhini</taxon>
        <taxon>Hominidae</taxon>
        <taxon>Homo</taxon>
    </lineage>
</organism>
<sequence length="299" mass="31745">MPLSGTPAPNKKRKSSKLIMELTGGGQESSGLNLGKKISVPRDVMLEELSLLTNRGSKMFKLRQMRVEKFIYENHPDVFSDSSMDHFQKFLPTVGGQLGTAGQGFSYSKSNGRGGSQAGGSGSAGQYGSDQQHHLGSGSGAGGTGGPAGQAGRGGAAGTAGVGETGSGDQAGGEGKHITVFKTYISPWERAMGVDPQQKMELGIDLLAYGAKAELPKYKSFNRTAMPYGGYEKASKRMTFQMPKFDLGPLLSEPLVLYNQNLSNRPSFNRTPIPWLSSGEPVDYNVDIGIPLDGETEEL</sequence>
<keyword id="KW-0002">3D-structure</keyword>
<keyword id="KW-0966">Cell projection</keyword>
<keyword id="KW-0539">Nucleus</keyword>
<keyword id="KW-0597">Phosphoprotein</keyword>
<keyword id="KW-1267">Proteomics identification</keyword>
<keyword id="KW-1185">Reference proteome</keyword>
<accession>Q9NP98</accession>
<accession>Q9H1I7</accession>
<proteinExistence type="evidence at protein level"/>
<gene>
    <name evidence="14" type="primary">MYOZ1</name>
    <name evidence="9" type="synonym">MYOZ</name>
</gene>
<reference evidence="8 12" key="1">
    <citation type="journal article" date="2000" name="J. Biol. Chem.">
        <title>FATZ, a filamin-, actinin-, and telethonin-binding protein of the Z-disc of skeletal muscle.</title>
        <authorList>
            <person name="Faulkner G."/>
            <person name="Pallavicini A."/>
            <person name="Comelli A."/>
            <person name="Salamon M."/>
            <person name="Bortoletto G."/>
            <person name="Ievolella C."/>
            <person name="Trevisan S."/>
            <person name="Kojic' S."/>
            <person name="Dalla Vecchia F."/>
            <person name="Laveder P."/>
            <person name="Valle G."/>
            <person name="Lanfranchi G."/>
        </authorList>
    </citation>
    <scope>NUCLEOTIDE SEQUENCE [MRNA]</scope>
    <scope>INTERACTION WITH ACTN2; FLNC AND TCAP</scope>
    <scope>SUBCELLULAR LOCATION</scope>
    <scope>TISSUE SPECIFICITY</scope>
    <source>
        <tissue evidence="12">Skeletal muscle</tissue>
    </source>
</reference>
<reference evidence="8 10" key="2">
    <citation type="journal article" date="2000" name="Proc. Natl. Acad. Sci. U.S.A.">
        <title>Calsarcins, a novel family of sarcomeric calcineurin-binding proteins.</title>
        <authorList>
            <person name="Frey N."/>
            <person name="Richardson J.A."/>
            <person name="Olson E.N."/>
        </authorList>
    </citation>
    <scope>NUCLEOTIDE SEQUENCE [MRNA]</scope>
    <scope>INTERACTION WITH ACTN2 AND PPP3CA</scope>
    <scope>TISSUE SPECIFICITY</scope>
    <source>
        <tissue evidence="4">Heart</tissue>
    </source>
</reference>
<reference evidence="8 9" key="3">
    <citation type="journal article" date="2001" name="Proc. Natl. Acad. Sci. U.S.A.">
        <title>Myozenin: an alpha-actinin- and gamma-filamin-binding protein of skeletal muscle Z lines.</title>
        <authorList>
            <person name="Takada F."/>
            <person name="Vander Woude D.L."/>
            <person name="Tong H.-Q."/>
            <person name="Thompson T.G."/>
            <person name="Watkins S.C."/>
            <person name="Kunkel L.M."/>
            <person name="Beggs A.H."/>
        </authorList>
    </citation>
    <scope>NUCLEOTIDE SEQUENCE [GENOMIC DNA / MRNA]</scope>
    <scope>INTERACTION WITH ACTN2; ACTN3 AND FLNC</scope>
    <scope>SUBCELLULAR LOCATION</scope>
    <scope>TISSUE SPECIFICITY</scope>
    <source>
        <tissue evidence="9">Skeletal muscle</tissue>
    </source>
</reference>
<reference evidence="13" key="4">
    <citation type="submission" date="2000-06" db="EMBL/GenBank/DDBJ databases">
        <authorList>
            <consortium name="The European IMAGE consortium"/>
        </authorList>
    </citation>
    <scope>NUCLEOTIDE SEQUENCE [LARGE SCALE MRNA]</scope>
</reference>
<reference evidence="11" key="5">
    <citation type="journal article" date="2004" name="Genome Res.">
        <title>The status, quality, and expansion of the NIH full-length cDNA project: the Mammalian Gene Collection (MGC).</title>
        <authorList>
            <consortium name="The MGC Project Team"/>
        </authorList>
    </citation>
    <scope>NUCLEOTIDE SEQUENCE [LARGE SCALE MRNA]</scope>
    <source>
        <tissue evidence="11">Lung</tissue>
    </source>
</reference>
<reference evidence="8" key="6">
    <citation type="journal article" date="2002" name="J. Biol. Chem.">
        <title>Calsarcin-3, a novel skeletal muscle-specific member of the calsarcin family, interacts with multiple Z-disc proteins.</title>
        <authorList>
            <person name="Frey N."/>
            <person name="Olson E.N."/>
        </authorList>
    </citation>
    <scope>INTERACTION WITH LDB3</scope>
</reference>
<reference evidence="8" key="7">
    <citation type="journal article" date="2005" name="J. Cell Sci.">
        <title>The Z-disc proteins myotilin and FATZ-1 interact with each other and are connected to the sarcolemma via muscle-specific filamins.</title>
        <authorList>
            <person name="Gontier Y."/>
            <person name="Taivainen A."/>
            <person name="Fontao L."/>
            <person name="Sonnenberg A."/>
            <person name="van der Flier A."/>
            <person name="Carpen O."/>
            <person name="Faulkner G."/>
            <person name="Borradori L."/>
        </authorList>
    </citation>
    <scope>INTERACTION WITH FLNA; FLNB; FLNC AND MYOT</scope>
    <scope>SUBCELLULAR LOCATION</scope>
</reference>
<feature type="chain" id="PRO_0000111095" description="Myozenin-1">
    <location>
        <begin position="1"/>
        <end position="299"/>
    </location>
</feature>
<feature type="region of interest" description="Disordered" evidence="2">
    <location>
        <begin position="1"/>
        <end position="34"/>
    </location>
</feature>
<feature type="region of interest" description="Disordered" evidence="2">
    <location>
        <begin position="102"/>
        <end position="174"/>
    </location>
</feature>
<feature type="compositionally biased region" description="Gly residues" evidence="2">
    <location>
        <begin position="112"/>
        <end position="125"/>
    </location>
</feature>
<feature type="compositionally biased region" description="Gly residues" evidence="2">
    <location>
        <begin position="137"/>
        <end position="173"/>
    </location>
</feature>
<feature type="modified residue" description="Phosphoserine" evidence="1">
    <location>
        <position position="82"/>
    </location>
</feature>
<feature type="sequence conflict" description="In Ref. 2; AAG38940." evidence="8" ref="2">
    <original>R</original>
    <variation>K</variation>
    <location>
        <position position="153"/>
    </location>
</feature>
<feature type="sequence conflict" description="In Ref. 2; AAG38940." evidence="8" ref="2">
    <original>A</original>
    <variation>T</variation>
    <location>
        <position position="160"/>
    </location>
</feature>
<feature type="helix" evidence="15">
    <location>
        <begin position="187"/>
        <end position="191"/>
    </location>
</feature>
<feature type="helix" evidence="15">
    <location>
        <begin position="231"/>
        <end position="238"/>
    </location>
</feature>
<name>MYOZ1_HUMAN</name>